<feature type="chain" id="PRO_0000128665" description="Polyphosphate kinase">
    <location>
        <begin position="1"/>
        <end position="728"/>
    </location>
</feature>
<feature type="region of interest" description="Disordered" evidence="2">
    <location>
        <begin position="694"/>
        <end position="728"/>
    </location>
</feature>
<feature type="compositionally biased region" description="Low complexity" evidence="2">
    <location>
        <begin position="695"/>
        <end position="709"/>
    </location>
</feature>
<feature type="active site" description="Phosphohistidine intermediate" evidence="1">
    <location>
        <position position="468"/>
    </location>
</feature>
<feature type="binding site" evidence="1">
    <location>
        <position position="57"/>
    </location>
    <ligand>
        <name>ATP</name>
        <dbReference type="ChEBI" id="CHEBI:30616"/>
    </ligand>
</feature>
<feature type="binding site" evidence="1">
    <location>
        <position position="408"/>
    </location>
    <ligand>
        <name>Mg(2+)</name>
        <dbReference type="ChEBI" id="CHEBI:18420"/>
    </ligand>
</feature>
<feature type="binding site" evidence="1">
    <location>
        <position position="438"/>
    </location>
    <ligand>
        <name>Mg(2+)</name>
        <dbReference type="ChEBI" id="CHEBI:18420"/>
    </ligand>
</feature>
<feature type="binding site" evidence="1">
    <location>
        <position position="501"/>
    </location>
    <ligand>
        <name>ATP</name>
        <dbReference type="ChEBI" id="CHEBI:30616"/>
    </ligand>
</feature>
<feature type="binding site" evidence="1">
    <location>
        <position position="597"/>
    </location>
    <ligand>
        <name>ATP</name>
        <dbReference type="ChEBI" id="CHEBI:30616"/>
    </ligand>
</feature>
<feature type="binding site" evidence="1">
    <location>
        <position position="625"/>
    </location>
    <ligand>
        <name>ATP</name>
        <dbReference type="ChEBI" id="CHEBI:30616"/>
    </ligand>
</feature>
<accession>Q55898</accession>
<comment type="function">
    <text evidence="1">Catalyzes the reversible transfer of the terminal phosphate of ATP to form a long-chain polyphosphate (polyP).</text>
</comment>
<comment type="catalytic activity">
    <reaction evidence="1">
        <text>[phosphate](n) + ATP = [phosphate](n+1) + ADP</text>
        <dbReference type="Rhea" id="RHEA:19573"/>
        <dbReference type="Rhea" id="RHEA-COMP:9859"/>
        <dbReference type="Rhea" id="RHEA-COMP:14280"/>
        <dbReference type="ChEBI" id="CHEBI:16838"/>
        <dbReference type="ChEBI" id="CHEBI:30616"/>
        <dbReference type="ChEBI" id="CHEBI:456216"/>
        <dbReference type="EC" id="2.7.4.1"/>
    </reaction>
</comment>
<comment type="cofactor">
    <cofactor evidence="1">
        <name>Mg(2+)</name>
        <dbReference type="ChEBI" id="CHEBI:18420"/>
    </cofactor>
</comment>
<comment type="PTM">
    <text evidence="1">An intermediate of this reaction is the autophosphorylated ppk in which a phosphate is covalently linked to a histidine residue through a N-P bond.</text>
</comment>
<comment type="similarity">
    <text evidence="1">Belongs to the polyphosphate kinase 1 (PPK1) family.</text>
</comment>
<dbReference type="EC" id="2.7.4.1" evidence="1"/>
<dbReference type="EMBL" id="BA000022">
    <property type="protein sequence ID" value="BAA10660.1"/>
    <property type="molecule type" value="Genomic_DNA"/>
</dbReference>
<dbReference type="PIR" id="S76968">
    <property type="entry name" value="S76968"/>
</dbReference>
<dbReference type="SMR" id="Q55898"/>
<dbReference type="STRING" id="1148.gene:10500165"/>
<dbReference type="PaxDb" id="1148-1001781"/>
<dbReference type="EnsemblBacteria" id="BAA10660">
    <property type="protein sequence ID" value="BAA10660"/>
    <property type="gene ID" value="BAA10660"/>
</dbReference>
<dbReference type="KEGG" id="syn:sll0290"/>
<dbReference type="eggNOG" id="COG0855">
    <property type="taxonomic scope" value="Bacteria"/>
</dbReference>
<dbReference type="InParanoid" id="Q55898"/>
<dbReference type="PhylomeDB" id="Q55898"/>
<dbReference type="Proteomes" id="UP000001425">
    <property type="component" value="Chromosome"/>
</dbReference>
<dbReference type="GO" id="GO:0016020">
    <property type="term" value="C:membrane"/>
    <property type="evidence" value="ECO:0000318"/>
    <property type="project" value="GO_Central"/>
</dbReference>
<dbReference type="GO" id="GO:0009358">
    <property type="term" value="C:polyphosphate kinase complex"/>
    <property type="evidence" value="ECO:0007669"/>
    <property type="project" value="InterPro"/>
</dbReference>
<dbReference type="GO" id="GO:0005524">
    <property type="term" value="F:ATP binding"/>
    <property type="evidence" value="ECO:0007669"/>
    <property type="project" value="UniProtKB-KW"/>
</dbReference>
<dbReference type="GO" id="GO:0046872">
    <property type="term" value="F:metal ion binding"/>
    <property type="evidence" value="ECO:0007669"/>
    <property type="project" value="UniProtKB-KW"/>
</dbReference>
<dbReference type="GO" id="GO:0008976">
    <property type="term" value="F:polyphosphate kinase activity"/>
    <property type="evidence" value="ECO:0000318"/>
    <property type="project" value="GO_Central"/>
</dbReference>
<dbReference type="GO" id="GO:0006799">
    <property type="term" value="P:polyphosphate biosynthetic process"/>
    <property type="evidence" value="ECO:0000318"/>
    <property type="project" value="GO_Central"/>
</dbReference>
<dbReference type="CDD" id="cd09165">
    <property type="entry name" value="PLDc_PaPPK1_C1_like"/>
    <property type="match status" value="1"/>
</dbReference>
<dbReference type="CDD" id="cd09168">
    <property type="entry name" value="PLDc_PaPPK1_C2_like"/>
    <property type="match status" value="1"/>
</dbReference>
<dbReference type="FunFam" id="3.30.870.10:FF:000001">
    <property type="entry name" value="Polyphosphate kinase"/>
    <property type="match status" value="1"/>
</dbReference>
<dbReference type="Gene3D" id="3.30.870.10">
    <property type="entry name" value="Endonuclease Chain A"/>
    <property type="match status" value="2"/>
</dbReference>
<dbReference type="Gene3D" id="3.30.1840.10">
    <property type="entry name" value="Polyphosphate kinase middle domain"/>
    <property type="match status" value="1"/>
</dbReference>
<dbReference type="Gene3D" id="1.20.58.310">
    <property type="entry name" value="Polyphosphate kinase N-terminal domain"/>
    <property type="match status" value="1"/>
</dbReference>
<dbReference type="HAMAP" id="MF_00347">
    <property type="entry name" value="Polyphosphate_kinase"/>
    <property type="match status" value="1"/>
</dbReference>
<dbReference type="InterPro" id="IPR003414">
    <property type="entry name" value="PP_kinase"/>
</dbReference>
<dbReference type="InterPro" id="IPR041108">
    <property type="entry name" value="PP_kinase_C_1"/>
</dbReference>
<dbReference type="InterPro" id="IPR024953">
    <property type="entry name" value="PP_kinase_middle"/>
</dbReference>
<dbReference type="InterPro" id="IPR036830">
    <property type="entry name" value="PP_kinase_middle_dom_sf"/>
</dbReference>
<dbReference type="InterPro" id="IPR025200">
    <property type="entry name" value="PPK_C_dom2"/>
</dbReference>
<dbReference type="InterPro" id="IPR025198">
    <property type="entry name" value="PPK_N_dom"/>
</dbReference>
<dbReference type="InterPro" id="IPR036832">
    <property type="entry name" value="PPK_N_dom_sf"/>
</dbReference>
<dbReference type="NCBIfam" id="TIGR03705">
    <property type="entry name" value="poly_P_kin"/>
    <property type="match status" value="1"/>
</dbReference>
<dbReference type="NCBIfam" id="NF003917">
    <property type="entry name" value="PRK05443.1-1"/>
    <property type="match status" value="1"/>
</dbReference>
<dbReference type="NCBIfam" id="NF003918">
    <property type="entry name" value="PRK05443.1-2"/>
    <property type="match status" value="1"/>
</dbReference>
<dbReference type="NCBIfam" id="NF003921">
    <property type="entry name" value="PRK05443.2-2"/>
    <property type="match status" value="1"/>
</dbReference>
<dbReference type="PANTHER" id="PTHR30218">
    <property type="entry name" value="POLYPHOSPHATE KINASE"/>
    <property type="match status" value="1"/>
</dbReference>
<dbReference type="PANTHER" id="PTHR30218:SF0">
    <property type="entry name" value="POLYPHOSPHATE KINASE"/>
    <property type="match status" value="1"/>
</dbReference>
<dbReference type="Pfam" id="PF02503">
    <property type="entry name" value="PP_kinase"/>
    <property type="match status" value="1"/>
</dbReference>
<dbReference type="Pfam" id="PF13090">
    <property type="entry name" value="PP_kinase_C"/>
    <property type="match status" value="1"/>
</dbReference>
<dbReference type="Pfam" id="PF17941">
    <property type="entry name" value="PP_kinase_C_1"/>
    <property type="match status" value="1"/>
</dbReference>
<dbReference type="Pfam" id="PF13089">
    <property type="entry name" value="PP_kinase_N"/>
    <property type="match status" value="1"/>
</dbReference>
<dbReference type="PIRSF" id="PIRSF015589">
    <property type="entry name" value="PP_kinase"/>
    <property type="match status" value="1"/>
</dbReference>
<dbReference type="SUPFAM" id="SSF56024">
    <property type="entry name" value="Phospholipase D/nuclease"/>
    <property type="match status" value="2"/>
</dbReference>
<dbReference type="SUPFAM" id="SSF143724">
    <property type="entry name" value="PHP14-like"/>
    <property type="match status" value="1"/>
</dbReference>
<dbReference type="SUPFAM" id="SSF140356">
    <property type="entry name" value="PPK N-terminal domain-like"/>
    <property type="match status" value="1"/>
</dbReference>
<protein>
    <recommendedName>
        <fullName evidence="1">Polyphosphate kinase</fullName>
        <ecNumber evidence="1">2.7.4.1</ecNumber>
    </recommendedName>
    <alternativeName>
        <fullName evidence="1">ATP-polyphosphate phosphotransferase</fullName>
    </alternativeName>
    <alternativeName>
        <fullName evidence="1">Polyphosphoric acid kinase</fullName>
    </alternativeName>
</protein>
<proteinExistence type="inferred from homology"/>
<reference key="1">
    <citation type="journal article" date="1995" name="DNA Res.">
        <title>Sequence analysis of the genome of the unicellular cyanobacterium Synechocystis sp. strain PCC6803. I. Sequence features in the 1 Mb region from map positions 64% to 92% of the genome.</title>
        <authorList>
            <person name="Kaneko T."/>
            <person name="Tanaka A."/>
            <person name="Sato S."/>
            <person name="Kotani H."/>
            <person name="Sazuka T."/>
            <person name="Miyajima N."/>
            <person name="Sugiura M."/>
            <person name="Tabata S."/>
        </authorList>
    </citation>
    <scope>NUCLEOTIDE SEQUENCE [LARGE SCALE GENOMIC DNA]</scope>
    <source>
        <strain>ATCC 27184 / PCC 6803 / N-1</strain>
    </source>
</reference>
<reference key="2">
    <citation type="journal article" date="1996" name="DNA Res.">
        <title>Sequence analysis of the genome of the unicellular cyanobacterium Synechocystis sp. strain PCC6803. II. Sequence determination of the entire genome and assignment of potential protein-coding regions.</title>
        <authorList>
            <person name="Kaneko T."/>
            <person name="Sato S."/>
            <person name="Kotani H."/>
            <person name="Tanaka A."/>
            <person name="Asamizu E."/>
            <person name="Nakamura Y."/>
            <person name="Miyajima N."/>
            <person name="Hirosawa M."/>
            <person name="Sugiura M."/>
            <person name="Sasamoto S."/>
            <person name="Kimura T."/>
            <person name="Hosouchi T."/>
            <person name="Matsuno A."/>
            <person name="Muraki A."/>
            <person name="Nakazaki N."/>
            <person name="Naruo K."/>
            <person name="Okumura S."/>
            <person name="Shimpo S."/>
            <person name="Takeuchi C."/>
            <person name="Wada T."/>
            <person name="Watanabe A."/>
            <person name="Yamada M."/>
            <person name="Yasuda M."/>
            <person name="Tabata S."/>
        </authorList>
    </citation>
    <scope>NUCLEOTIDE SEQUENCE [LARGE SCALE GENOMIC DNA]</scope>
    <source>
        <strain>ATCC 27184 / PCC 6803 / Kazusa</strain>
    </source>
</reference>
<organism>
    <name type="scientific">Synechocystis sp. (strain ATCC 27184 / PCC 6803 / Kazusa)</name>
    <dbReference type="NCBI Taxonomy" id="1111708"/>
    <lineage>
        <taxon>Bacteria</taxon>
        <taxon>Bacillati</taxon>
        <taxon>Cyanobacteriota</taxon>
        <taxon>Cyanophyceae</taxon>
        <taxon>Synechococcales</taxon>
        <taxon>Merismopediaceae</taxon>
        <taxon>Synechocystis</taxon>
    </lineage>
</organism>
<keyword id="KW-0067">ATP-binding</keyword>
<keyword id="KW-0418">Kinase</keyword>
<keyword id="KW-0460">Magnesium</keyword>
<keyword id="KW-0479">Metal-binding</keyword>
<keyword id="KW-0547">Nucleotide-binding</keyword>
<keyword id="KW-0597">Phosphoprotein</keyword>
<keyword id="KW-1185">Reference proteome</keyword>
<keyword id="KW-0677">Repeat</keyword>
<keyword id="KW-0808">Transferase</keyword>
<evidence type="ECO:0000255" key="1">
    <source>
        <dbReference type="HAMAP-Rule" id="MF_00347"/>
    </source>
</evidence>
<evidence type="ECO:0000256" key="2">
    <source>
        <dbReference type="SAM" id="MobiDB-lite"/>
    </source>
</evidence>
<name>PPK1_SYNY3</name>
<gene>
    <name evidence="1" type="primary">ppk</name>
    <name type="ordered locus">sll0290</name>
</gene>
<sequence>MIQAMPSAPTVDFKDPAYYFNRELSWLAFNQRVLHEGLDDRTPLLERLKFLAIFCSNLDEFFMVRVAGLKQQVEANVTKLTADGRTPSQQLKEISKSLRPLVYQQNQVFEYVLKEKLADEGIFLNDYVDLSQEERQYLHQFYDDHIFPVLTPLAVDPSHPFPYISNLSLNLGVVVRDPDTDEELFARVKVPPTLPRFVALPEDVCQPDPNKPWLWTGVPLEQVIAHNLASLFPGMIIQECHLFRVTRNADIAVEEDEADDLLLAIEEELRKRRVGKSAVRLEINASTPKNIRDRLMTDLGLEEIDVYDIDGLLGLKDLFFFLSLPAPHLKDEPWASVIPPRLKHVYEFVDGDEDGRVQQEGIDIFTLIRQGDILVHHPYQSFTASVQQFITQAAYDPHVLTIKMTLYRTSGDSPIVNALIAAAENGKQVAVLVELKARFDEENNINWARKLEQYGVHVVYGLVGLKTHTKTVLVVRQEGPDIRRYVHIGTGNYNPKTAKLYTDLGLITCRPELGNDLTNLFNFLTGYSRQKDYQKLLVAPVNMRERMVAMIEREADHCLNGGTGRIVAKMNSLVDTQIIRALYAASQAGVQIDLIVRGICCLRPGVENVSENIRVISVIGRLLEHSRIFYFHNGGEEEIYIGSADWMSRNLTRRVEAVVPVEQPDLKQELQSILGILLADNRQAWELQPDGTYVQRRPASPEQSQSSQAIFTAQAIAETTEDPELRSV</sequence>